<name>MNHF2_STAHJ</name>
<reference key="1">
    <citation type="journal article" date="2005" name="J. Bacteriol.">
        <title>Whole-genome sequencing of Staphylococcus haemolyticus uncovers the extreme plasticity of its genome and the evolution of human-colonizing staphylococcal species.</title>
        <authorList>
            <person name="Takeuchi F."/>
            <person name="Watanabe S."/>
            <person name="Baba T."/>
            <person name="Yuzawa H."/>
            <person name="Ito T."/>
            <person name="Morimoto Y."/>
            <person name="Kuroda M."/>
            <person name="Cui L."/>
            <person name="Takahashi M."/>
            <person name="Ankai A."/>
            <person name="Baba S."/>
            <person name="Fukui S."/>
            <person name="Lee J.C."/>
            <person name="Hiramatsu K."/>
        </authorList>
    </citation>
    <scope>NUCLEOTIDE SEQUENCE [LARGE SCALE GENOMIC DNA]</scope>
    <source>
        <strain>JCSC1435</strain>
    </source>
</reference>
<evidence type="ECO:0000250" key="1"/>
<evidence type="ECO:0000255" key="2"/>
<evidence type="ECO:0000305" key="3"/>
<keyword id="KW-0050">Antiport</keyword>
<keyword id="KW-1003">Cell membrane</keyword>
<keyword id="KW-0406">Ion transport</keyword>
<keyword id="KW-0472">Membrane</keyword>
<keyword id="KW-0812">Transmembrane</keyword>
<keyword id="KW-1133">Transmembrane helix</keyword>
<keyword id="KW-0813">Transport</keyword>
<proteinExistence type="inferred from homology"/>
<protein>
    <recommendedName>
        <fullName>Putative antiporter subunit mnhF2</fullName>
    </recommendedName>
    <alternativeName>
        <fullName>Mrp complex subunit F2</fullName>
    </alternativeName>
    <alternativeName>
        <fullName>Putative NADH-ubiquinone oxidoreductase subunit mnhF2</fullName>
    </alternativeName>
</protein>
<sequence length="100" mass="10779">MIETLTNFFITSALVLFGIAFIIGLFRLIKGPTTADRVVAFDASSAVIMCIIGIVSVIYNTVSFLDSIMLVAIISFVSSVSISRFIGGGRVFNGTNKRNH</sequence>
<dbReference type="EMBL" id="AP006716">
    <property type="protein sequence ID" value="BAE05579.1"/>
    <property type="molecule type" value="Genomic_DNA"/>
</dbReference>
<dbReference type="RefSeq" id="WP_011276529.1">
    <property type="nucleotide sequence ID" value="NC_007168.1"/>
</dbReference>
<dbReference type="SMR" id="Q4L448"/>
<dbReference type="GeneID" id="93781584"/>
<dbReference type="KEGG" id="sha:SH2270"/>
<dbReference type="eggNOG" id="COG2212">
    <property type="taxonomic scope" value="Bacteria"/>
</dbReference>
<dbReference type="HOGENOM" id="CLU_125825_1_3_9"/>
<dbReference type="OrthoDB" id="9799958at2"/>
<dbReference type="Proteomes" id="UP000000543">
    <property type="component" value="Chromosome"/>
</dbReference>
<dbReference type="GO" id="GO:0005886">
    <property type="term" value="C:plasma membrane"/>
    <property type="evidence" value="ECO:0007669"/>
    <property type="project" value="UniProtKB-SubCell"/>
</dbReference>
<dbReference type="GO" id="GO:0015385">
    <property type="term" value="F:sodium:proton antiporter activity"/>
    <property type="evidence" value="ECO:0007669"/>
    <property type="project" value="TreeGrafter"/>
</dbReference>
<dbReference type="InterPro" id="IPR007208">
    <property type="entry name" value="MrpF/PhaF-like"/>
</dbReference>
<dbReference type="NCBIfam" id="NF009300">
    <property type="entry name" value="PRK12657.1"/>
    <property type="match status" value="1"/>
</dbReference>
<dbReference type="PANTHER" id="PTHR34702">
    <property type="entry name" value="NA(+)/H(+) ANTIPORTER SUBUNIT F1"/>
    <property type="match status" value="1"/>
</dbReference>
<dbReference type="PANTHER" id="PTHR34702:SF1">
    <property type="entry name" value="NA(+)_H(+) ANTIPORTER SUBUNIT F"/>
    <property type="match status" value="1"/>
</dbReference>
<dbReference type="Pfam" id="PF04066">
    <property type="entry name" value="MrpF_PhaF"/>
    <property type="match status" value="1"/>
</dbReference>
<dbReference type="PIRSF" id="PIRSF028784">
    <property type="entry name" value="MrpF"/>
    <property type="match status" value="1"/>
</dbReference>
<accession>Q4L448</accession>
<feature type="chain" id="PRO_0000372207" description="Putative antiporter subunit mnhF2">
    <location>
        <begin position="1"/>
        <end position="100"/>
    </location>
</feature>
<feature type="transmembrane region" description="Helical" evidence="2">
    <location>
        <begin position="6"/>
        <end position="26"/>
    </location>
</feature>
<feature type="transmembrane region" description="Helical" evidence="2">
    <location>
        <begin position="38"/>
        <end position="58"/>
    </location>
</feature>
<feature type="transmembrane region" description="Helical" evidence="2">
    <location>
        <begin position="62"/>
        <end position="82"/>
    </location>
</feature>
<gene>
    <name type="primary">mnhF2</name>
    <name type="synonym">mrpF2</name>
    <name type="ordered locus">SH2270</name>
</gene>
<organism>
    <name type="scientific">Staphylococcus haemolyticus (strain JCSC1435)</name>
    <dbReference type="NCBI Taxonomy" id="279808"/>
    <lineage>
        <taxon>Bacteria</taxon>
        <taxon>Bacillati</taxon>
        <taxon>Bacillota</taxon>
        <taxon>Bacilli</taxon>
        <taxon>Bacillales</taxon>
        <taxon>Staphylococcaceae</taxon>
        <taxon>Staphylococcus</taxon>
    </lineage>
</organism>
<comment type="subunit">
    <text evidence="1">May form a heterooligomeric complex that consists of seven subunits: mnhA2, mnhB2, mnhC2, mnhD2, mnhE2, mnhF2 and mnhG2.</text>
</comment>
<comment type="subcellular location">
    <subcellularLocation>
        <location evidence="3">Cell membrane</location>
        <topology evidence="3">Multi-pass membrane protein</topology>
    </subcellularLocation>
</comment>
<comment type="similarity">
    <text evidence="3">Belongs to the CPA3 antiporters (TC 2.A.63) subunit F family.</text>
</comment>